<sequence>MKNIGQMLKQAQQLQTRMAEVQEELKAMDVSGQSAAGMCVVTLDGKGGVRSIKIDPSLVDPKETEVMEDLIVAAFNDAKAKVDEMVKEKMSELTGGLKLPPGMSLPF</sequence>
<feature type="chain" id="PRO_1000003812" description="Nucleoid-associated protein Rru_A3472">
    <location>
        <begin position="1"/>
        <end position="107"/>
    </location>
</feature>
<dbReference type="EMBL" id="CP000230">
    <property type="protein sequence ID" value="ABC24266.1"/>
    <property type="molecule type" value="Genomic_DNA"/>
</dbReference>
<dbReference type="RefSeq" id="WP_011391219.1">
    <property type="nucleotide sequence ID" value="NC_007643.1"/>
</dbReference>
<dbReference type="RefSeq" id="YP_428553.1">
    <property type="nucleotide sequence ID" value="NC_007643.1"/>
</dbReference>
<dbReference type="SMR" id="Q2RNM9"/>
<dbReference type="STRING" id="269796.Rru_A3472"/>
<dbReference type="EnsemblBacteria" id="ABC24266">
    <property type="protein sequence ID" value="ABC24266"/>
    <property type="gene ID" value="Rru_A3472"/>
</dbReference>
<dbReference type="KEGG" id="rru:Rru_A3472"/>
<dbReference type="PATRIC" id="fig|269796.9.peg.3588"/>
<dbReference type="eggNOG" id="COG0718">
    <property type="taxonomic scope" value="Bacteria"/>
</dbReference>
<dbReference type="HOGENOM" id="CLU_140930_0_1_5"/>
<dbReference type="PhylomeDB" id="Q2RNM9"/>
<dbReference type="Proteomes" id="UP000001929">
    <property type="component" value="Chromosome"/>
</dbReference>
<dbReference type="GO" id="GO:0043590">
    <property type="term" value="C:bacterial nucleoid"/>
    <property type="evidence" value="ECO:0007669"/>
    <property type="project" value="UniProtKB-UniRule"/>
</dbReference>
<dbReference type="GO" id="GO:0005829">
    <property type="term" value="C:cytosol"/>
    <property type="evidence" value="ECO:0007669"/>
    <property type="project" value="TreeGrafter"/>
</dbReference>
<dbReference type="GO" id="GO:0003677">
    <property type="term" value="F:DNA binding"/>
    <property type="evidence" value="ECO:0007669"/>
    <property type="project" value="UniProtKB-UniRule"/>
</dbReference>
<dbReference type="Gene3D" id="3.30.1310.10">
    <property type="entry name" value="Nucleoid-associated protein YbaB-like domain"/>
    <property type="match status" value="1"/>
</dbReference>
<dbReference type="HAMAP" id="MF_00274">
    <property type="entry name" value="DNA_YbaB_EbfC"/>
    <property type="match status" value="1"/>
</dbReference>
<dbReference type="InterPro" id="IPR036894">
    <property type="entry name" value="YbaB-like_sf"/>
</dbReference>
<dbReference type="InterPro" id="IPR004401">
    <property type="entry name" value="YbaB/EbfC"/>
</dbReference>
<dbReference type="NCBIfam" id="TIGR00103">
    <property type="entry name" value="DNA_YbaB_EbfC"/>
    <property type="match status" value="1"/>
</dbReference>
<dbReference type="PANTHER" id="PTHR33449">
    <property type="entry name" value="NUCLEOID-ASSOCIATED PROTEIN YBAB"/>
    <property type="match status" value="1"/>
</dbReference>
<dbReference type="PANTHER" id="PTHR33449:SF1">
    <property type="entry name" value="NUCLEOID-ASSOCIATED PROTEIN YBAB"/>
    <property type="match status" value="1"/>
</dbReference>
<dbReference type="Pfam" id="PF02575">
    <property type="entry name" value="YbaB_DNA_bd"/>
    <property type="match status" value="1"/>
</dbReference>
<dbReference type="PIRSF" id="PIRSF004555">
    <property type="entry name" value="UCP004555"/>
    <property type="match status" value="1"/>
</dbReference>
<dbReference type="SUPFAM" id="SSF82607">
    <property type="entry name" value="YbaB-like"/>
    <property type="match status" value="1"/>
</dbReference>
<evidence type="ECO:0000255" key="1">
    <source>
        <dbReference type="HAMAP-Rule" id="MF_00274"/>
    </source>
</evidence>
<proteinExistence type="inferred from homology"/>
<gene>
    <name type="ordered locus">Rru_A3472</name>
</gene>
<comment type="function">
    <text evidence="1">Binds to DNA and alters its conformation. May be involved in regulation of gene expression, nucleoid organization and DNA protection.</text>
</comment>
<comment type="subunit">
    <text evidence="1">Homodimer.</text>
</comment>
<comment type="subcellular location">
    <subcellularLocation>
        <location evidence="1">Cytoplasm</location>
        <location evidence="1">Nucleoid</location>
    </subcellularLocation>
</comment>
<comment type="similarity">
    <text evidence="1">Belongs to the YbaB/EbfC family.</text>
</comment>
<organism>
    <name type="scientific">Rhodospirillum rubrum (strain ATCC 11170 / ATH 1.1.1 / DSM 467 / LMG 4362 / NCIMB 8255 / S1)</name>
    <dbReference type="NCBI Taxonomy" id="269796"/>
    <lineage>
        <taxon>Bacteria</taxon>
        <taxon>Pseudomonadati</taxon>
        <taxon>Pseudomonadota</taxon>
        <taxon>Alphaproteobacteria</taxon>
        <taxon>Rhodospirillales</taxon>
        <taxon>Rhodospirillaceae</taxon>
        <taxon>Rhodospirillum</taxon>
    </lineage>
</organism>
<name>Y3472_RHORT</name>
<reference key="1">
    <citation type="journal article" date="2011" name="Stand. Genomic Sci.">
        <title>Complete genome sequence of Rhodospirillum rubrum type strain (S1).</title>
        <authorList>
            <person name="Munk A.C."/>
            <person name="Copeland A."/>
            <person name="Lucas S."/>
            <person name="Lapidus A."/>
            <person name="Del Rio T.G."/>
            <person name="Barry K."/>
            <person name="Detter J.C."/>
            <person name="Hammon N."/>
            <person name="Israni S."/>
            <person name="Pitluck S."/>
            <person name="Brettin T."/>
            <person name="Bruce D."/>
            <person name="Han C."/>
            <person name="Tapia R."/>
            <person name="Gilna P."/>
            <person name="Schmutz J."/>
            <person name="Larimer F."/>
            <person name="Land M."/>
            <person name="Kyrpides N.C."/>
            <person name="Mavromatis K."/>
            <person name="Richardson P."/>
            <person name="Rohde M."/>
            <person name="Goeker M."/>
            <person name="Klenk H.P."/>
            <person name="Zhang Y."/>
            <person name="Roberts G.P."/>
            <person name="Reslewic S."/>
            <person name="Schwartz D.C."/>
        </authorList>
    </citation>
    <scope>NUCLEOTIDE SEQUENCE [LARGE SCALE GENOMIC DNA]</scope>
    <source>
        <strain>ATCC 11170 / ATH 1.1.1 / DSM 467 / LMG 4362 / NCIMB 8255 / S1</strain>
    </source>
</reference>
<protein>
    <recommendedName>
        <fullName evidence="1">Nucleoid-associated protein Rru_A3472</fullName>
    </recommendedName>
</protein>
<keyword id="KW-0963">Cytoplasm</keyword>
<keyword id="KW-0238">DNA-binding</keyword>
<keyword id="KW-1185">Reference proteome</keyword>
<accession>Q2RNM9</accession>